<evidence type="ECO:0000250" key="1">
    <source>
        <dbReference type="UniProtKB" id="Q9BZJ7"/>
    </source>
</evidence>
<evidence type="ECO:0000255" key="2"/>
<evidence type="ECO:0000255" key="3">
    <source>
        <dbReference type="PROSITE-ProRule" id="PRU00521"/>
    </source>
</evidence>
<evidence type="ECO:0000256" key="4">
    <source>
        <dbReference type="SAM" id="MobiDB-lite"/>
    </source>
</evidence>
<evidence type="ECO:0000269" key="5">
    <source>
    </source>
</evidence>
<gene>
    <name type="primary">Gpr62</name>
</gene>
<protein>
    <recommendedName>
        <fullName>G-protein coupled receptor 62</fullName>
    </recommendedName>
</protein>
<comment type="function">
    <text evidence="1 5">Orphan G-protein coupled receptor. Constitutively activates the G(q/11)/inositol phosphate and the G(s)-alpha/cAMP signaling pathways (PubMed:28912303). Has spontaneous activity for beta-arrestin recruitment (By similarity). Shows a reciprocal regulatory interaction with the melatonin receptor MTNR1B most likely through receptor heteromerization (By similarity).</text>
</comment>
<comment type="subunit">
    <text evidence="1 5">Homodimer (PubMed:28912303). Forms heterodimer with MTNR1B (By similarity). Interacts with ARRB1 and ARRB2 in a spontaneous and agonist-independent manner; leading to the internalization of GPR62 in the endosomal compartment (By similarity).</text>
</comment>
<comment type="subcellular location">
    <subcellularLocation>
        <location evidence="1">Cell membrane</location>
        <topology evidence="2">Multi-pass membrane protein</topology>
    </subcellularLocation>
    <subcellularLocation>
        <location evidence="1">Endosome membrane</location>
        <topology evidence="2">Multi-pass membrane protein</topology>
    </subcellularLocation>
    <text evidence="1">Colocalizes with ARRB2 in the endosome.</text>
</comment>
<comment type="tissue specificity">
    <text evidence="5">Expressed in the brain and testes. Expressed widely, in the brain, including the cerebral cortex, cerebellum, hippocampus,thalamus and pituitary gland. In the testes, expressed specifically in the germ cells.</text>
</comment>
<comment type="developmental stage">
    <text evidence="5">Expression in the testes starts 25 days after birth and continues thereafter.</text>
</comment>
<comment type="domain">
    <text evidence="5">Lacks the conserved DRY and BBXXB motifs. The restoration of these motifs affects its constitutive activity.</text>
</comment>
<comment type="disruption phenotype">
    <text evidence="5">Deficient mice show any abnormality in growth and behavior. Both male and female are fertile.</text>
</comment>
<comment type="similarity">
    <text evidence="3">Belongs to the G-protein coupled receptor 1 family.</text>
</comment>
<name>GPR62_MOUSE</name>
<accession>Q80UC6</accession>
<accession>Q8CEQ6</accession>
<reference key="1">
    <citation type="journal article" date="2009" name="PLoS Biol.">
        <title>Lineage-specific biology revealed by a finished genome assembly of the mouse.</title>
        <authorList>
            <person name="Church D.M."/>
            <person name="Goodstadt L."/>
            <person name="Hillier L.W."/>
            <person name="Zody M.C."/>
            <person name="Goldstein S."/>
            <person name="She X."/>
            <person name="Bult C.J."/>
            <person name="Agarwala R."/>
            <person name="Cherry J.L."/>
            <person name="DiCuccio M."/>
            <person name="Hlavina W."/>
            <person name="Kapustin Y."/>
            <person name="Meric P."/>
            <person name="Maglott D."/>
            <person name="Birtle Z."/>
            <person name="Marques A.C."/>
            <person name="Graves T."/>
            <person name="Zhou S."/>
            <person name="Teague B."/>
            <person name="Potamousis K."/>
            <person name="Churas C."/>
            <person name="Place M."/>
            <person name="Herschleb J."/>
            <person name="Runnheim R."/>
            <person name="Forrest D."/>
            <person name="Amos-Landgraf J."/>
            <person name="Schwartz D.C."/>
            <person name="Cheng Z."/>
            <person name="Lindblad-Toh K."/>
            <person name="Eichler E.E."/>
            <person name="Ponting C.P."/>
        </authorList>
    </citation>
    <scope>NUCLEOTIDE SEQUENCE [LARGE SCALE GENOMIC DNA]</scope>
    <source>
        <strain>C57BL/6J</strain>
    </source>
</reference>
<reference key="2">
    <citation type="journal article" date="2003" name="Proc. Natl. Acad. Sci. U.S.A.">
        <title>The G protein-coupled receptor repertoires of human and mouse.</title>
        <authorList>
            <person name="Vassilatis D.K."/>
            <person name="Hohmann J.G."/>
            <person name="Zeng H."/>
            <person name="Li F."/>
            <person name="Ranchalis J.E."/>
            <person name="Mortrud M.T."/>
            <person name="Brown A."/>
            <person name="Rodriguez S.S."/>
            <person name="Weller J.R."/>
            <person name="Wright A.C."/>
            <person name="Bergmann J.E."/>
            <person name="Gaitanaris G.A."/>
        </authorList>
    </citation>
    <scope>NUCLEOTIDE SEQUENCE [LARGE SCALE MRNA] OF 17-120</scope>
</reference>
<reference key="3">
    <citation type="journal article" date="2005" name="Science">
        <title>The transcriptional landscape of the mammalian genome.</title>
        <authorList>
            <person name="Carninci P."/>
            <person name="Kasukawa T."/>
            <person name="Katayama S."/>
            <person name="Gough J."/>
            <person name="Frith M.C."/>
            <person name="Maeda N."/>
            <person name="Oyama R."/>
            <person name="Ravasi T."/>
            <person name="Lenhard B."/>
            <person name="Wells C."/>
            <person name="Kodzius R."/>
            <person name="Shimokawa K."/>
            <person name="Bajic V.B."/>
            <person name="Brenner S.E."/>
            <person name="Batalov S."/>
            <person name="Forrest A.R."/>
            <person name="Zavolan M."/>
            <person name="Davis M.J."/>
            <person name="Wilming L.G."/>
            <person name="Aidinis V."/>
            <person name="Allen J.E."/>
            <person name="Ambesi-Impiombato A."/>
            <person name="Apweiler R."/>
            <person name="Aturaliya R.N."/>
            <person name="Bailey T.L."/>
            <person name="Bansal M."/>
            <person name="Baxter L."/>
            <person name="Beisel K.W."/>
            <person name="Bersano T."/>
            <person name="Bono H."/>
            <person name="Chalk A.M."/>
            <person name="Chiu K.P."/>
            <person name="Choudhary V."/>
            <person name="Christoffels A."/>
            <person name="Clutterbuck D.R."/>
            <person name="Crowe M.L."/>
            <person name="Dalla E."/>
            <person name="Dalrymple B.P."/>
            <person name="de Bono B."/>
            <person name="Della Gatta G."/>
            <person name="di Bernardo D."/>
            <person name="Down T."/>
            <person name="Engstrom P."/>
            <person name="Fagiolini M."/>
            <person name="Faulkner G."/>
            <person name="Fletcher C.F."/>
            <person name="Fukushima T."/>
            <person name="Furuno M."/>
            <person name="Futaki S."/>
            <person name="Gariboldi M."/>
            <person name="Georgii-Hemming P."/>
            <person name="Gingeras T.R."/>
            <person name="Gojobori T."/>
            <person name="Green R.E."/>
            <person name="Gustincich S."/>
            <person name="Harbers M."/>
            <person name="Hayashi Y."/>
            <person name="Hensch T.K."/>
            <person name="Hirokawa N."/>
            <person name="Hill D."/>
            <person name="Huminiecki L."/>
            <person name="Iacono M."/>
            <person name="Ikeo K."/>
            <person name="Iwama A."/>
            <person name="Ishikawa T."/>
            <person name="Jakt M."/>
            <person name="Kanapin A."/>
            <person name="Katoh M."/>
            <person name="Kawasawa Y."/>
            <person name="Kelso J."/>
            <person name="Kitamura H."/>
            <person name="Kitano H."/>
            <person name="Kollias G."/>
            <person name="Krishnan S.P."/>
            <person name="Kruger A."/>
            <person name="Kummerfeld S.K."/>
            <person name="Kurochkin I.V."/>
            <person name="Lareau L.F."/>
            <person name="Lazarevic D."/>
            <person name="Lipovich L."/>
            <person name="Liu J."/>
            <person name="Liuni S."/>
            <person name="McWilliam S."/>
            <person name="Madan Babu M."/>
            <person name="Madera M."/>
            <person name="Marchionni L."/>
            <person name="Matsuda H."/>
            <person name="Matsuzawa S."/>
            <person name="Miki H."/>
            <person name="Mignone F."/>
            <person name="Miyake S."/>
            <person name="Morris K."/>
            <person name="Mottagui-Tabar S."/>
            <person name="Mulder N."/>
            <person name="Nakano N."/>
            <person name="Nakauchi H."/>
            <person name="Ng P."/>
            <person name="Nilsson R."/>
            <person name="Nishiguchi S."/>
            <person name="Nishikawa S."/>
            <person name="Nori F."/>
            <person name="Ohara O."/>
            <person name="Okazaki Y."/>
            <person name="Orlando V."/>
            <person name="Pang K.C."/>
            <person name="Pavan W.J."/>
            <person name="Pavesi G."/>
            <person name="Pesole G."/>
            <person name="Petrovsky N."/>
            <person name="Piazza S."/>
            <person name="Reed J."/>
            <person name="Reid J.F."/>
            <person name="Ring B.Z."/>
            <person name="Ringwald M."/>
            <person name="Rost B."/>
            <person name="Ruan Y."/>
            <person name="Salzberg S.L."/>
            <person name="Sandelin A."/>
            <person name="Schneider C."/>
            <person name="Schoenbach C."/>
            <person name="Sekiguchi K."/>
            <person name="Semple C.A."/>
            <person name="Seno S."/>
            <person name="Sessa L."/>
            <person name="Sheng Y."/>
            <person name="Shibata Y."/>
            <person name="Shimada H."/>
            <person name="Shimada K."/>
            <person name="Silva D."/>
            <person name="Sinclair B."/>
            <person name="Sperling S."/>
            <person name="Stupka E."/>
            <person name="Sugiura K."/>
            <person name="Sultana R."/>
            <person name="Takenaka Y."/>
            <person name="Taki K."/>
            <person name="Tammoja K."/>
            <person name="Tan S.L."/>
            <person name="Tang S."/>
            <person name="Taylor M.S."/>
            <person name="Tegner J."/>
            <person name="Teichmann S.A."/>
            <person name="Ueda H.R."/>
            <person name="van Nimwegen E."/>
            <person name="Verardo R."/>
            <person name="Wei C.L."/>
            <person name="Yagi K."/>
            <person name="Yamanishi H."/>
            <person name="Zabarovsky E."/>
            <person name="Zhu S."/>
            <person name="Zimmer A."/>
            <person name="Hide W."/>
            <person name="Bult C."/>
            <person name="Grimmond S.M."/>
            <person name="Teasdale R.D."/>
            <person name="Liu E.T."/>
            <person name="Brusic V."/>
            <person name="Quackenbush J."/>
            <person name="Wahlestedt C."/>
            <person name="Mattick J.S."/>
            <person name="Hume D.A."/>
            <person name="Kai C."/>
            <person name="Sasaki D."/>
            <person name="Tomaru Y."/>
            <person name="Fukuda S."/>
            <person name="Kanamori-Katayama M."/>
            <person name="Suzuki M."/>
            <person name="Aoki J."/>
            <person name="Arakawa T."/>
            <person name="Iida J."/>
            <person name="Imamura K."/>
            <person name="Itoh M."/>
            <person name="Kato T."/>
            <person name="Kawaji H."/>
            <person name="Kawagashira N."/>
            <person name="Kawashima T."/>
            <person name="Kojima M."/>
            <person name="Kondo S."/>
            <person name="Konno H."/>
            <person name="Nakano K."/>
            <person name="Ninomiya N."/>
            <person name="Nishio T."/>
            <person name="Okada M."/>
            <person name="Plessy C."/>
            <person name="Shibata K."/>
            <person name="Shiraki T."/>
            <person name="Suzuki S."/>
            <person name="Tagami M."/>
            <person name="Waki K."/>
            <person name="Watahiki A."/>
            <person name="Okamura-Oho Y."/>
            <person name="Suzuki H."/>
            <person name="Kawai J."/>
            <person name="Hayashizaki Y."/>
        </authorList>
    </citation>
    <scope>NUCLEOTIDE SEQUENCE [LARGE SCALE MRNA] OF 271-358</scope>
    <source>
        <strain>C57BL/6J</strain>
        <tissue>Testis</tissue>
    </source>
</reference>
<reference key="4">
    <citation type="journal article" date="2017" name="Reproduction">
        <title>GPR62 constitutively activates cAMP signaling but is dispensable for male fertility in mice.</title>
        <authorList>
            <person name="Muroi T."/>
            <person name="Matsushima Y."/>
            <person name="Kanamori R."/>
            <person name="Inoue H."/>
            <person name="Fujii W."/>
            <person name="Yogo K."/>
        </authorList>
    </citation>
    <scope>DISRUPTION PHENOTYPE</scope>
    <scope>TISSUE SPECIFICITY</scope>
    <scope>DEVELOPMENTAL STAGE</scope>
    <scope>MUTAGENESIS OF ALA-111 AND 232-GLY--LEU-237</scope>
    <scope>SUBUNIT</scope>
    <scope>FUNCTION</scope>
</reference>
<keyword id="KW-1003">Cell membrane</keyword>
<keyword id="KW-0967">Endosome</keyword>
<keyword id="KW-0297">G-protein coupled receptor</keyword>
<keyword id="KW-0325">Glycoprotein</keyword>
<keyword id="KW-0472">Membrane</keyword>
<keyword id="KW-0675">Receptor</keyword>
<keyword id="KW-1185">Reference proteome</keyword>
<keyword id="KW-0807">Transducer</keyword>
<keyword id="KW-0812">Transmembrane</keyword>
<keyword id="KW-1133">Transmembrane helix</keyword>
<feature type="chain" id="PRO_0000305584" description="G-protein coupled receptor 62">
    <location>
        <begin position="1"/>
        <end position="358"/>
    </location>
</feature>
<feature type="topological domain" description="Extracellular" evidence="2">
    <location>
        <begin position="1"/>
        <end position="17"/>
    </location>
</feature>
<feature type="transmembrane region" description="Helical; Name=1" evidence="2">
    <location>
        <begin position="18"/>
        <end position="38"/>
    </location>
</feature>
<feature type="topological domain" description="Cytoplasmic" evidence="2">
    <location>
        <begin position="39"/>
        <end position="53"/>
    </location>
</feature>
<feature type="transmembrane region" description="Helical; Name=2" evidence="2">
    <location>
        <begin position="54"/>
        <end position="74"/>
    </location>
</feature>
<feature type="topological domain" description="Extracellular" evidence="2">
    <location>
        <begin position="75"/>
        <end position="89"/>
    </location>
</feature>
<feature type="transmembrane region" description="Helical; Name=3" evidence="2">
    <location>
        <begin position="90"/>
        <end position="110"/>
    </location>
</feature>
<feature type="topological domain" description="Cytoplasmic" evidence="2">
    <location>
        <begin position="111"/>
        <end position="128"/>
    </location>
</feature>
<feature type="transmembrane region" description="Helical; Name=4" evidence="2">
    <location>
        <begin position="129"/>
        <end position="149"/>
    </location>
</feature>
<feature type="topological domain" description="Extracellular" evidence="2">
    <location>
        <begin position="150"/>
        <end position="176"/>
    </location>
</feature>
<feature type="transmembrane region" description="Helical; Name=5" evidence="2">
    <location>
        <begin position="177"/>
        <end position="197"/>
    </location>
</feature>
<feature type="topological domain" description="Cytoplasmic" evidence="2">
    <location>
        <begin position="198"/>
        <end position="234"/>
    </location>
</feature>
<feature type="transmembrane region" description="Helical; Name=6" evidence="2">
    <location>
        <begin position="235"/>
        <end position="255"/>
    </location>
</feature>
<feature type="topological domain" description="Extracellular" evidence="2">
    <location>
        <begin position="256"/>
        <end position="268"/>
    </location>
</feature>
<feature type="transmembrane region" description="Helical; Name=7" evidence="2">
    <location>
        <begin position="269"/>
        <end position="289"/>
    </location>
</feature>
<feature type="topological domain" description="Cytoplasmic" evidence="2">
    <location>
        <begin position="290"/>
        <end position="358"/>
    </location>
</feature>
<feature type="region of interest" description="Disordered" evidence="4">
    <location>
        <begin position="334"/>
        <end position="358"/>
    </location>
</feature>
<feature type="glycosylation site" description="N-linked (GlcNAc...) asparagine" evidence="2">
    <location>
        <position position="3"/>
    </location>
</feature>
<feature type="mutagenesis site" description="No effect on constitutive activity; No effect on protein level; Does not affect homooligomerization." evidence="5">
    <original>A</original>
    <variation>D</variation>
    <location>
        <position position="111"/>
    </location>
</feature>
<feature type="mutagenesis site" description="Strong decreases on constitutive activity; No effect on protein level; Does not affect homooligomerization." evidence="5">
    <original>GGKAAL</original>
    <variation>KKAAKT</variation>
    <location>
        <begin position="232"/>
        <end position="237"/>
    </location>
</feature>
<dbReference type="EMBL" id="AC151729">
    <property type="status" value="NOT_ANNOTATED_CDS"/>
    <property type="molecule type" value="Genomic_DNA"/>
</dbReference>
<dbReference type="EMBL" id="AK016613">
    <property type="protein sequence ID" value="BAC25490.1"/>
    <property type="molecule type" value="mRNA"/>
</dbReference>
<dbReference type="EMBL" id="AY255551">
    <property type="protein sequence ID" value="AAO85063.1"/>
    <property type="molecule type" value="mRNA"/>
</dbReference>
<dbReference type="CCDS" id="CCDS52909.1"/>
<dbReference type="RefSeq" id="NP_001153124.1">
    <property type="nucleotide sequence ID" value="NM_001159652.2"/>
</dbReference>
<dbReference type="RefSeq" id="XP_006511830.1">
    <property type="nucleotide sequence ID" value="XM_006511767.3"/>
</dbReference>
<dbReference type="SMR" id="Q80UC6"/>
<dbReference type="FunCoup" id="Q80UC6">
    <property type="interactions" value="91"/>
</dbReference>
<dbReference type="STRING" id="10090.ENSMUSP00000129055"/>
<dbReference type="GlyCosmos" id="Q80UC6">
    <property type="glycosylation" value="1 site, No reported glycans"/>
</dbReference>
<dbReference type="GlyGen" id="Q80UC6">
    <property type="glycosylation" value="2 sites, 1 N-linked glycan (1 site)"/>
</dbReference>
<dbReference type="iPTMnet" id="Q80UC6"/>
<dbReference type="PhosphoSitePlus" id="Q80UC6"/>
<dbReference type="SwissPalm" id="Q80UC6"/>
<dbReference type="jPOST" id="Q80UC6"/>
<dbReference type="PaxDb" id="10090-ENSMUSP00000129055"/>
<dbReference type="ProteomicsDB" id="271071"/>
<dbReference type="Antibodypedia" id="14225">
    <property type="antibodies" value="220 antibodies from 29 providers"/>
</dbReference>
<dbReference type="Ensembl" id="ENSMUST00000164834.3">
    <property type="protein sequence ID" value="ENSMUSP00000129055.2"/>
    <property type="gene ID" value="ENSMUSG00000091735.3"/>
</dbReference>
<dbReference type="GeneID" id="436090"/>
<dbReference type="KEGG" id="mmu:436090"/>
<dbReference type="UCSC" id="uc012gzw.1">
    <property type="organism name" value="mouse"/>
</dbReference>
<dbReference type="AGR" id="MGI:3525078"/>
<dbReference type="CTD" id="118442"/>
<dbReference type="MGI" id="MGI:3525078">
    <property type="gene designation" value="Gpr62"/>
</dbReference>
<dbReference type="VEuPathDB" id="HostDB:ENSMUSG00000091735"/>
<dbReference type="eggNOG" id="KOG3656">
    <property type="taxonomic scope" value="Eukaryota"/>
</dbReference>
<dbReference type="GeneTree" id="ENSGT00950000182998"/>
<dbReference type="HOGENOM" id="CLU_067115_0_0_1"/>
<dbReference type="InParanoid" id="Q80UC6"/>
<dbReference type="OMA" id="FRPLWAM"/>
<dbReference type="OrthoDB" id="6117944at2759"/>
<dbReference type="PhylomeDB" id="Q80UC6"/>
<dbReference type="TreeFam" id="TF332667"/>
<dbReference type="BioGRID-ORCS" id="436090">
    <property type="hits" value="2 hits in 78 CRISPR screens"/>
</dbReference>
<dbReference type="PRO" id="PR:Q80UC6"/>
<dbReference type="Proteomes" id="UP000000589">
    <property type="component" value="Chromosome 9"/>
</dbReference>
<dbReference type="RNAct" id="Q80UC6">
    <property type="molecule type" value="protein"/>
</dbReference>
<dbReference type="Bgee" id="ENSMUSG00000091735">
    <property type="expression patterns" value="Expressed in lumbar subsegment of spinal cord and 78 other cell types or tissues"/>
</dbReference>
<dbReference type="GO" id="GO:0005768">
    <property type="term" value="C:endosome"/>
    <property type="evidence" value="ECO:0000250"/>
    <property type="project" value="UniProtKB"/>
</dbReference>
<dbReference type="GO" id="GO:0010008">
    <property type="term" value="C:endosome membrane"/>
    <property type="evidence" value="ECO:0007669"/>
    <property type="project" value="UniProtKB-SubCell"/>
</dbReference>
<dbReference type="GO" id="GO:0005886">
    <property type="term" value="C:plasma membrane"/>
    <property type="evidence" value="ECO:0000250"/>
    <property type="project" value="UniProtKB"/>
</dbReference>
<dbReference type="GO" id="GO:0043235">
    <property type="term" value="C:receptor complex"/>
    <property type="evidence" value="ECO:0000266"/>
    <property type="project" value="MGI"/>
</dbReference>
<dbReference type="GO" id="GO:1990763">
    <property type="term" value="F:arrestin family protein binding"/>
    <property type="evidence" value="ECO:0000250"/>
    <property type="project" value="UniProtKB"/>
</dbReference>
<dbReference type="GO" id="GO:0004930">
    <property type="term" value="F:G protein-coupled receptor activity"/>
    <property type="evidence" value="ECO:0007669"/>
    <property type="project" value="UniProtKB-KW"/>
</dbReference>
<dbReference type="GO" id="GO:0042802">
    <property type="term" value="F:identical protein binding"/>
    <property type="evidence" value="ECO:0000315"/>
    <property type="project" value="UniProtKB"/>
</dbReference>
<dbReference type="GO" id="GO:0007189">
    <property type="term" value="P:adenylate cyclase-activating G protein-coupled receptor signaling pathway"/>
    <property type="evidence" value="ECO:0000314"/>
    <property type="project" value="GO_Central"/>
</dbReference>
<dbReference type="GO" id="GO:0038035">
    <property type="term" value="P:ligand-independent adenylate cyclase-activating G protein-coupled receptor signaling pathway"/>
    <property type="evidence" value="ECO:0000250"/>
    <property type="project" value="UniProtKB"/>
</dbReference>
<dbReference type="GO" id="GO:0050850">
    <property type="term" value="P:positive regulation of calcium-mediated signaling"/>
    <property type="evidence" value="ECO:0000250"/>
    <property type="project" value="UniProtKB"/>
</dbReference>
<dbReference type="FunFam" id="1.20.1070.10:FF:000374">
    <property type="entry name" value="probable G-protein coupled receptor 62"/>
    <property type="match status" value="1"/>
</dbReference>
<dbReference type="Gene3D" id="1.20.1070.10">
    <property type="entry name" value="Rhodopsin 7-helix transmembrane proteins"/>
    <property type="match status" value="1"/>
</dbReference>
<dbReference type="InterPro" id="IPR000276">
    <property type="entry name" value="GPCR_Rhodpsn"/>
</dbReference>
<dbReference type="InterPro" id="IPR017452">
    <property type="entry name" value="GPCR_Rhodpsn_7TM"/>
</dbReference>
<dbReference type="PANTHER" id="PTHR22752">
    <property type="entry name" value="G PROTEIN-COUPLED RECEPTOR"/>
    <property type="match status" value="1"/>
</dbReference>
<dbReference type="PANTHER" id="PTHR22752:SF11">
    <property type="entry name" value="G-PROTEIN COUPLED RECEPTOR 62"/>
    <property type="match status" value="1"/>
</dbReference>
<dbReference type="Pfam" id="PF00001">
    <property type="entry name" value="7tm_1"/>
    <property type="match status" value="1"/>
</dbReference>
<dbReference type="PRINTS" id="PR00237">
    <property type="entry name" value="GPCRRHODOPSN"/>
</dbReference>
<dbReference type="SUPFAM" id="SSF81321">
    <property type="entry name" value="Family A G protein-coupled receptor-like"/>
    <property type="match status" value="1"/>
</dbReference>
<dbReference type="PROSITE" id="PS50262">
    <property type="entry name" value="G_PROTEIN_RECEP_F1_2"/>
    <property type="match status" value="1"/>
</dbReference>
<proteinExistence type="evidence at protein level"/>
<organism>
    <name type="scientific">Mus musculus</name>
    <name type="common">Mouse</name>
    <dbReference type="NCBI Taxonomy" id="10090"/>
    <lineage>
        <taxon>Eukaryota</taxon>
        <taxon>Metazoa</taxon>
        <taxon>Chordata</taxon>
        <taxon>Craniata</taxon>
        <taxon>Vertebrata</taxon>
        <taxon>Euteleostomi</taxon>
        <taxon>Mammalia</taxon>
        <taxon>Eutheria</taxon>
        <taxon>Euarchontoglires</taxon>
        <taxon>Glires</taxon>
        <taxon>Rodentia</taxon>
        <taxon>Myomorpha</taxon>
        <taxon>Muroidea</taxon>
        <taxon>Muridae</taxon>
        <taxon>Murinae</taxon>
        <taxon>Mus</taxon>
        <taxon>Mus</taxon>
    </lineage>
</organism>
<sequence>MANGSGLSVTELAGSVGFILAVLVEVGAVLGNGTLLVVVLRTPDLQDAFYLAHLCVVDLLAAASIMPLGLLAAPPGLGTVPLDPSSCRAARFLSAALLPACTLGVAALGLARYRLIVHPLRPGARPAPALVLTAVWSAAALLGALSLLGPPPAPPPAPARCSVLAGGLGPFRPLWAMLAFALPALLLLAAYGSIFLVARRAALRPPRGTRPRSDSLDSRLSFLPPLRPRLLGGKAALAPALAVGQFAACWLPYGCACLAPAARAAAAEATVTWVAYSAFAAHPFLYGLLQRPVRLALGRLTRRALPRAPKACTSQAWHLQTLLRRLQELRKDPVLGPSEAPEQARELARQTPSVSEAT</sequence>